<gene>
    <name type="primary">yqzG</name>
    <name type="ordered locus">BSU24650</name>
</gene>
<accession>O32019</accession>
<name>YQZG_BACSU</name>
<dbReference type="EMBL" id="AL009126">
    <property type="protein sequence ID" value="CAB14396.1"/>
    <property type="molecule type" value="Genomic_DNA"/>
</dbReference>
<dbReference type="PIR" id="F69969">
    <property type="entry name" value="F69969"/>
</dbReference>
<dbReference type="RefSeq" id="NP_390345.1">
    <property type="nucleotide sequence ID" value="NC_000964.3"/>
</dbReference>
<dbReference type="RefSeq" id="WP_003246051.1">
    <property type="nucleotide sequence ID" value="NZ_OZ025638.1"/>
</dbReference>
<dbReference type="PDB" id="2LYX">
    <property type="method" value="NMR"/>
    <property type="chains" value="A=23-108"/>
</dbReference>
<dbReference type="PDBsum" id="2LYX"/>
<dbReference type="BMRB" id="O32019"/>
<dbReference type="SMR" id="O32019"/>
<dbReference type="FunCoup" id="O32019">
    <property type="interactions" value="101"/>
</dbReference>
<dbReference type="STRING" id="224308.BSU24650"/>
<dbReference type="PaxDb" id="224308-BSU24650"/>
<dbReference type="DNASU" id="938529"/>
<dbReference type="EnsemblBacteria" id="CAB14396">
    <property type="protein sequence ID" value="CAB14396"/>
    <property type="gene ID" value="BSU_24650"/>
</dbReference>
<dbReference type="GeneID" id="938529"/>
<dbReference type="KEGG" id="bsu:BSU24650"/>
<dbReference type="PATRIC" id="fig|224308.179.peg.2683"/>
<dbReference type="eggNOG" id="ENOG50307UH">
    <property type="taxonomic scope" value="Bacteria"/>
</dbReference>
<dbReference type="InParanoid" id="O32019"/>
<dbReference type="OrthoDB" id="2377048at2"/>
<dbReference type="BioCyc" id="BSUB:BSU24650-MONOMER"/>
<dbReference type="EvolutionaryTrace" id="O32019"/>
<dbReference type="Proteomes" id="UP000001570">
    <property type="component" value="Chromosome"/>
</dbReference>
<dbReference type="Gene3D" id="3.10.450.390">
    <property type="entry name" value="Protein of unknown function DUF3889"/>
    <property type="match status" value="1"/>
</dbReference>
<dbReference type="InterPro" id="IPR024987">
    <property type="entry name" value="DUF3889"/>
</dbReference>
<dbReference type="Pfam" id="PF13028">
    <property type="entry name" value="DUF3889"/>
    <property type="match status" value="1"/>
</dbReference>
<evidence type="ECO:0000255" key="1"/>
<evidence type="ECO:0007829" key="2">
    <source>
        <dbReference type="PDB" id="2LYX"/>
    </source>
</evidence>
<organism>
    <name type="scientific">Bacillus subtilis (strain 168)</name>
    <dbReference type="NCBI Taxonomy" id="224308"/>
    <lineage>
        <taxon>Bacteria</taxon>
        <taxon>Bacillati</taxon>
        <taxon>Bacillota</taxon>
        <taxon>Bacilli</taxon>
        <taxon>Bacillales</taxon>
        <taxon>Bacillaceae</taxon>
        <taxon>Bacillus</taxon>
    </lineage>
</organism>
<protein>
    <recommendedName>
        <fullName>Uncharacterized protein YqzG</fullName>
    </recommendedName>
</protein>
<reference key="1">
    <citation type="journal article" date="1997" name="Nature">
        <title>The complete genome sequence of the Gram-positive bacterium Bacillus subtilis.</title>
        <authorList>
            <person name="Kunst F."/>
            <person name="Ogasawara N."/>
            <person name="Moszer I."/>
            <person name="Albertini A.M."/>
            <person name="Alloni G."/>
            <person name="Azevedo V."/>
            <person name="Bertero M.G."/>
            <person name="Bessieres P."/>
            <person name="Bolotin A."/>
            <person name="Borchert S."/>
            <person name="Borriss R."/>
            <person name="Boursier L."/>
            <person name="Brans A."/>
            <person name="Braun M."/>
            <person name="Brignell S.C."/>
            <person name="Bron S."/>
            <person name="Brouillet S."/>
            <person name="Bruschi C.V."/>
            <person name="Caldwell B."/>
            <person name="Capuano V."/>
            <person name="Carter N.M."/>
            <person name="Choi S.-K."/>
            <person name="Codani J.-J."/>
            <person name="Connerton I.F."/>
            <person name="Cummings N.J."/>
            <person name="Daniel R.A."/>
            <person name="Denizot F."/>
            <person name="Devine K.M."/>
            <person name="Duesterhoeft A."/>
            <person name="Ehrlich S.D."/>
            <person name="Emmerson P.T."/>
            <person name="Entian K.-D."/>
            <person name="Errington J."/>
            <person name="Fabret C."/>
            <person name="Ferrari E."/>
            <person name="Foulger D."/>
            <person name="Fritz C."/>
            <person name="Fujita M."/>
            <person name="Fujita Y."/>
            <person name="Fuma S."/>
            <person name="Galizzi A."/>
            <person name="Galleron N."/>
            <person name="Ghim S.-Y."/>
            <person name="Glaser P."/>
            <person name="Goffeau A."/>
            <person name="Golightly E.J."/>
            <person name="Grandi G."/>
            <person name="Guiseppi G."/>
            <person name="Guy B.J."/>
            <person name="Haga K."/>
            <person name="Haiech J."/>
            <person name="Harwood C.R."/>
            <person name="Henaut A."/>
            <person name="Hilbert H."/>
            <person name="Holsappel S."/>
            <person name="Hosono S."/>
            <person name="Hullo M.-F."/>
            <person name="Itaya M."/>
            <person name="Jones L.-M."/>
            <person name="Joris B."/>
            <person name="Karamata D."/>
            <person name="Kasahara Y."/>
            <person name="Klaerr-Blanchard M."/>
            <person name="Klein C."/>
            <person name="Kobayashi Y."/>
            <person name="Koetter P."/>
            <person name="Koningstein G."/>
            <person name="Krogh S."/>
            <person name="Kumano M."/>
            <person name="Kurita K."/>
            <person name="Lapidus A."/>
            <person name="Lardinois S."/>
            <person name="Lauber J."/>
            <person name="Lazarevic V."/>
            <person name="Lee S.-M."/>
            <person name="Levine A."/>
            <person name="Liu H."/>
            <person name="Masuda S."/>
            <person name="Mauel C."/>
            <person name="Medigue C."/>
            <person name="Medina N."/>
            <person name="Mellado R.P."/>
            <person name="Mizuno M."/>
            <person name="Moestl D."/>
            <person name="Nakai S."/>
            <person name="Noback M."/>
            <person name="Noone D."/>
            <person name="O'Reilly M."/>
            <person name="Ogawa K."/>
            <person name="Ogiwara A."/>
            <person name="Oudega B."/>
            <person name="Park S.-H."/>
            <person name="Parro V."/>
            <person name="Pohl T.M."/>
            <person name="Portetelle D."/>
            <person name="Porwollik S."/>
            <person name="Prescott A.M."/>
            <person name="Presecan E."/>
            <person name="Pujic P."/>
            <person name="Purnelle B."/>
            <person name="Rapoport G."/>
            <person name="Rey M."/>
            <person name="Reynolds S."/>
            <person name="Rieger M."/>
            <person name="Rivolta C."/>
            <person name="Rocha E."/>
            <person name="Roche B."/>
            <person name="Rose M."/>
            <person name="Sadaie Y."/>
            <person name="Sato T."/>
            <person name="Scanlan E."/>
            <person name="Schleich S."/>
            <person name="Schroeter R."/>
            <person name="Scoffone F."/>
            <person name="Sekiguchi J."/>
            <person name="Sekowska A."/>
            <person name="Seror S.J."/>
            <person name="Serror P."/>
            <person name="Shin B.-S."/>
            <person name="Soldo B."/>
            <person name="Sorokin A."/>
            <person name="Tacconi E."/>
            <person name="Takagi T."/>
            <person name="Takahashi H."/>
            <person name="Takemaru K."/>
            <person name="Takeuchi M."/>
            <person name="Tamakoshi A."/>
            <person name="Tanaka T."/>
            <person name="Terpstra P."/>
            <person name="Tognoni A."/>
            <person name="Tosato V."/>
            <person name="Uchiyama S."/>
            <person name="Vandenbol M."/>
            <person name="Vannier F."/>
            <person name="Vassarotti A."/>
            <person name="Viari A."/>
            <person name="Wambutt R."/>
            <person name="Wedler E."/>
            <person name="Wedler H."/>
            <person name="Weitzenegger T."/>
            <person name="Winters P."/>
            <person name="Wipat A."/>
            <person name="Yamamoto H."/>
            <person name="Yamane K."/>
            <person name="Yasumoto K."/>
            <person name="Yata K."/>
            <person name="Yoshida K."/>
            <person name="Yoshikawa H.-F."/>
            <person name="Zumstein E."/>
            <person name="Yoshikawa H."/>
            <person name="Danchin A."/>
        </authorList>
    </citation>
    <scope>NUCLEOTIDE SEQUENCE [LARGE SCALE GENOMIC DNA]</scope>
    <source>
        <strain>168</strain>
    </source>
</reference>
<sequence>MMIKQCVICLSLLVFGTTAAHAEETPLVTARHMSKWEEIAVKEAKKRYPLAQVLFKQKVWDRKRKDEAVKQYHLTLREGSKEFGVFVTISFDPYSQKVNKIAILEEYQ</sequence>
<feature type="signal peptide" evidence="1">
    <location>
        <begin position="1"/>
        <end position="22"/>
    </location>
</feature>
<feature type="chain" id="PRO_0000360723" description="Uncharacterized protein YqzG">
    <location>
        <begin position="23"/>
        <end position="108"/>
    </location>
</feature>
<feature type="strand" evidence="2">
    <location>
        <begin position="24"/>
        <end position="26"/>
    </location>
</feature>
<feature type="helix" evidence="2">
    <location>
        <begin position="39"/>
        <end position="46"/>
    </location>
</feature>
<feature type="strand" evidence="2">
    <location>
        <begin position="57"/>
        <end position="63"/>
    </location>
</feature>
<feature type="strand" evidence="2">
    <location>
        <begin position="68"/>
        <end position="78"/>
    </location>
</feature>
<feature type="strand" evidence="2">
    <location>
        <begin position="81"/>
        <end position="91"/>
    </location>
</feature>
<feature type="turn" evidence="2">
    <location>
        <begin position="93"/>
        <end position="95"/>
    </location>
</feature>
<feature type="strand" evidence="2">
    <location>
        <begin position="98"/>
        <end position="105"/>
    </location>
</feature>
<keyword id="KW-0002">3D-structure</keyword>
<keyword id="KW-1185">Reference proteome</keyword>
<keyword id="KW-0732">Signal</keyword>
<proteinExistence type="evidence at protein level"/>